<keyword id="KW-0217">Developmental protein</keyword>
<keyword id="KW-0221">Differentiation</keyword>
<keyword id="KW-1015">Disulfide bond</keyword>
<keyword id="KW-0325">Glycoprotein</keyword>
<keyword id="KW-0472">Membrane</keyword>
<keyword id="KW-0524">Neurogenesis</keyword>
<keyword id="KW-1185">Reference proteome</keyword>
<keyword id="KW-0677">Repeat</keyword>
<keyword id="KW-0732">Signal</keyword>
<keyword id="KW-0812">Transmembrane</keyword>
<keyword id="KW-1133">Transmembrane helix</keyword>
<proteinExistence type="evidence at transcript level"/>
<comment type="function">
    <text evidence="1 6">Bifunctional axonal guidance cue regulated by sulfated proteoglycans; attractive effects result from interactions with heparan sulfate proteoglycans (HSPGs), while the inhibitory effects depend on interactions with chondroitin sulfate proteoglycans (CSPGs). Ligand for receptor PLXNB3. In glioma cells, SEMA5A stimulation of PLXNB3 results in the disassembly of F-actin stress fibers, disruption of focal adhesions and cellular collapse as well as inhibition of cell migration and invasion through ARHGDIA-mediated inactivation of RAC1 (By similarity). May promote angiogenesis by increasing endothelial cell proliferation and migration and inhibiting apoptosis.</text>
</comment>
<comment type="subunit">
    <text evidence="1">Binds PLXNB3.</text>
</comment>
<comment type="subcellular location">
    <subcellularLocation>
        <location>Membrane</location>
        <topology>Single-pass type I membrane protein</topology>
    </subcellularLocation>
</comment>
<comment type="tissue specificity">
    <text>In adult, detected in liver, brain, kidney, heart, lung and spleen.</text>
</comment>
<comment type="developmental stage">
    <text evidence="5 7">Differentially expressed in embryonic and adult tissues. Its abundance decreases from 10 dpc to birth. At 10.5 dpc, detected in the atrial septum and endocardial cushions, and at lower levels in the atrial and ventricular endocardium. Strong expression detected in embryonic and postnatal retina. At P0 and P3, expression detected in the outer neuroblastic layer. After P7, the expression becomes more restricted and is observed in the middle to outer part of inner nuclear layer, and is not detectable at P21 when retinal development is almost complete.</text>
</comment>
<comment type="disruption phenotype">
    <text evidence="5 7">Mutant mice die between 11.5 and 12.5 dpc. At this stage, no defects are detected in the development of extraembryonic tissues, cardiovascular system, axonal trajectories and peripheral nervous system. Mutants display decreased complexity of the hierarchically organized branches of the cranial blood vessels (PubMed:15743826). Mutant mice are viable and fertile (PubMed:21835343).</text>
</comment>
<comment type="similarity">
    <text evidence="8">Belongs to the semaphorin family.</text>
</comment>
<dbReference type="EMBL" id="X97817">
    <property type="protein sequence ID" value="CAA66397.1"/>
    <property type="molecule type" value="mRNA"/>
</dbReference>
<dbReference type="SMR" id="Q62217"/>
<dbReference type="FunCoup" id="Q62217">
    <property type="interactions" value="350"/>
</dbReference>
<dbReference type="STRING" id="10090.ENSMUSP00000069024"/>
<dbReference type="GlyCosmos" id="Q62217">
    <property type="glycosylation" value="10 sites, No reported glycans"/>
</dbReference>
<dbReference type="GlyGen" id="Q62217">
    <property type="glycosylation" value="10 sites, 2 N-linked glycans (3 sites)"/>
</dbReference>
<dbReference type="iPTMnet" id="Q62217"/>
<dbReference type="PhosphoSitePlus" id="Q62217"/>
<dbReference type="SwissPalm" id="Q62217"/>
<dbReference type="PaxDb" id="10090-ENSMUSP00000069024"/>
<dbReference type="PeptideAtlas" id="Q62217"/>
<dbReference type="ProteomicsDB" id="256944"/>
<dbReference type="AGR" id="MGI:107556"/>
<dbReference type="MGI" id="MGI:107556">
    <property type="gene designation" value="Sema5a"/>
</dbReference>
<dbReference type="eggNOG" id="KOG3611">
    <property type="taxonomic scope" value="Eukaryota"/>
</dbReference>
<dbReference type="InParanoid" id="Q62217"/>
<dbReference type="PhylomeDB" id="Q62217"/>
<dbReference type="Reactome" id="R-MMU-416700">
    <property type="pathway name" value="Other semaphorin interactions"/>
</dbReference>
<dbReference type="Reactome" id="R-MMU-5173214">
    <property type="pathway name" value="O-glycosylation of TSR domain-containing proteins"/>
</dbReference>
<dbReference type="ChiTaRS" id="Sema5a">
    <property type="organism name" value="mouse"/>
</dbReference>
<dbReference type="PRO" id="PR:Q62217"/>
<dbReference type="Proteomes" id="UP000000589">
    <property type="component" value="Unplaced"/>
</dbReference>
<dbReference type="RNAct" id="Q62217">
    <property type="molecule type" value="protein"/>
</dbReference>
<dbReference type="GO" id="GO:0016020">
    <property type="term" value="C:membrane"/>
    <property type="evidence" value="ECO:0000314"/>
    <property type="project" value="MGI"/>
</dbReference>
<dbReference type="GO" id="GO:0008046">
    <property type="term" value="F:axon guidance receptor activity"/>
    <property type="evidence" value="ECO:0000314"/>
    <property type="project" value="MGI"/>
</dbReference>
<dbReference type="GO" id="GO:0035373">
    <property type="term" value="F:chondroitin sulfate proteoglycan binding"/>
    <property type="evidence" value="ECO:0000250"/>
    <property type="project" value="UniProtKB"/>
</dbReference>
<dbReference type="GO" id="GO:0043395">
    <property type="term" value="F:heparan sulfate proteoglycan binding"/>
    <property type="evidence" value="ECO:0000250"/>
    <property type="project" value="UniProtKB"/>
</dbReference>
<dbReference type="GO" id="GO:0030215">
    <property type="term" value="F:semaphorin receptor binding"/>
    <property type="evidence" value="ECO:0000353"/>
    <property type="project" value="UniProtKB"/>
</dbReference>
<dbReference type="GO" id="GO:0045545">
    <property type="term" value="F:syndecan binding"/>
    <property type="evidence" value="ECO:0000250"/>
    <property type="project" value="UniProtKB"/>
</dbReference>
<dbReference type="GO" id="GO:0048675">
    <property type="term" value="P:axon extension"/>
    <property type="evidence" value="ECO:0000316"/>
    <property type="project" value="MGI"/>
</dbReference>
<dbReference type="GO" id="GO:0007411">
    <property type="term" value="P:axon guidance"/>
    <property type="evidence" value="ECO:0000315"/>
    <property type="project" value="MGI"/>
</dbReference>
<dbReference type="GO" id="GO:0007413">
    <property type="term" value="P:axonal fasciculation"/>
    <property type="evidence" value="ECO:0000250"/>
    <property type="project" value="UniProtKB"/>
</dbReference>
<dbReference type="GO" id="GO:0002043">
    <property type="term" value="P:blood vessel endothelial cell proliferation involved in sprouting angiogenesis"/>
    <property type="evidence" value="ECO:0000314"/>
    <property type="project" value="UniProtKB"/>
</dbReference>
<dbReference type="GO" id="GO:0001569">
    <property type="term" value="P:branching involved in blood vessel morphogenesis"/>
    <property type="evidence" value="ECO:0000315"/>
    <property type="project" value="MGI"/>
</dbReference>
<dbReference type="GO" id="GO:0048754">
    <property type="term" value="P:branching morphogenesis of an epithelial tube"/>
    <property type="evidence" value="ECO:0000315"/>
    <property type="project" value="MGI"/>
</dbReference>
<dbReference type="GO" id="GO:0060326">
    <property type="term" value="P:cell chemotaxis"/>
    <property type="evidence" value="ECO:0000314"/>
    <property type="project" value="UniProtKB"/>
</dbReference>
<dbReference type="GO" id="GO:0050908">
    <property type="term" value="P:detection of light stimulus involved in visual perception"/>
    <property type="evidence" value="ECO:0000316"/>
    <property type="project" value="MGI"/>
</dbReference>
<dbReference type="GO" id="GO:0021536">
    <property type="term" value="P:diencephalon development"/>
    <property type="evidence" value="ECO:0000250"/>
    <property type="project" value="UniProtKB"/>
</dbReference>
<dbReference type="GO" id="GO:0048843">
    <property type="term" value="P:negative regulation of axon extension involved in axon guidance"/>
    <property type="evidence" value="ECO:0000250"/>
    <property type="project" value="UniProtKB"/>
</dbReference>
<dbReference type="GO" id="GO:0007162">
    <property type="term" value="P:negative regulation of cell adhesion"/>
    <property type="evidence" value="ECO:0000314"/>
    <property type="project" value="UniProtKB"/>
</dbReference>
<dbReference type="GO" id="GO:2000352">
    <property type="term" value="P:negative regulation of endothelial cell apoptotic process"/>
    <property type="evidence" value="ECO:0000314"/>
    <property type="project" value="UniProtKB"/>
</dbReference>
<dbReference type="GO" id="GO:1990138">
    <property type="term" value="P:neuron projection extension"/>
    <property type="evidence" value="ECO:0000314"/>
    <property type="project" value="MGI"/>
</dbReference>
<dbReference type="GO" id="GO:0097485">
    <property type="term" value="P:neuron projection guidance"/>
    <property type="evidence" value="ECO:0000316"/>
    <property type="project" value="MGI"/>
</dbReference>
<dbReference type="GO" id="GO:0050918">
    <property type="term" value="P:positive chemotaxis"/>
    <property type="evidence" value="ECO:0000314"/>
    <property type="project" value="UniProtKB"/>
</dbReference>
<dbReference type="GO" id="GO:0030836">
    <property type="term" value="P:positive regulation of actin filament depolymerization"/>
    <property type="evidence" value="ECO:0000314"/>
    <property type="project" value="UniProtKB"/>
</dbReference>
<dbReference type="GO" id="GO:0045766">
    <property type="term" value="P:positive regulation of angiogenesis"/>
    <property type="evidence" value="ECO:0000314"/>
    <property type="project" value="UniProtKB"/>
</dbReference>
<dbReference type="GO" id="GO:0048842">
    <property type="term" value="P:positive regulation of axon extension involved in axon guidance"/>
    <property type="evidence" value="ECO:0000250"/>
    <property type="project" value="UniProtKB"/>
</dbReference>
<dbReference type="GO" id="GO:0090263">
    <property type="term" value="P:positive regulation of canonical Wnt signaling pathway"/>
    <property type="evidence" value="ECO:0000314"/>
    <property type="project" value="UniProtKB"/>
</dbReference>
<dbReference type="GO" id="GO:2001028">
    <property type="term" value="P:positive regulation of endothelial cell chemotaxis"/>
    <property type="evidence" value="ECO:0000314"/>
    <property type="project" value="UniProtKB"/>
</dbReference>
<dbReference type="GO" id="GO:0001938">
    <property type="term" value="P:positive regulation of endothelial cell proliferation"/>
    <property type="evidence" value="ECO:0000314"/>
    <property type="project" value="UniProtKB"/>
</dbReference>
<dbReference type="GO" id="GO:0090091">
    <property type="term" value="P:positive regulation of extracellular matrix disassembly"/>
    <property type="evidence" value="ECO:0000303"/>
    <property type="project" value="UniProtKB"/>
</dbReference>
<dbReference type="GO" id="GO:0051897">
    <property type="term" value="P:positive regulation of phosphatidylinositol 3-kinase/protein kinase B signal transduction"/>
    <property type="evidence" value="ECO:0000314"/>
    <property type="project" value="UniProtKB"/>
</dbReference>
<dbReference type="GO" id="GO:0071526">
    <property type="term" value="P:semaphorin-plexin signaling pathway"/>
    <property type="evidence" value="ECO:0000314"/>
    <property type="project" value="UniProtKB"/>
</dbReference>
<dbReference type="GO" id="GO:1990256">
    <property type="term" value="P:signal clustering"/>
    <property type="evidence" value="ECO:0000314"/>
    <property type="project" value="UniProtKB"/>
</dbReference>
<dbReference type="CDD" id="cd11263">
    <property type="entry name" value="Sema_5A"/>
    <property type="match status" value="1"/>
</dbReference>
<dbReference type="FunFam" id="2.20.100.10:FF:000001">
    <property type="entry name" value="semaphorin-5A isoform X1"/>
    <property type="match status" value="3"/>
</dbReference>
<dbReference type="FunFam" id="2.130.10.10:FF:000048">
    <property type="entry name" value="semaphorin-5B isoform X1"/>
    <property type="match status" value="1"/>
</dbReference>
<dbReference type="FunFam" id="2.20.100.10:FF:000021">
    <property type="entry name" value="semaphorin-5B isoform X1"/>
    <property type="match status" value="1"/>
</dbReference>
<dbReference type="FunFam" id="3.30.1680.10:FF:000003">
    <property type="entry name" value="semaphorin-5B isoform X1"/>
    <property type="match status" value="1"/>
</dbReference>
<dbReference type="FunFam" id="2.20.100.10:FF:000007">
    <property type="entry name" value="Thrombospondin 1"/>
    <property type="match status" value="1"/>
</dbReference>
<dbReference type="Gene3D" id="3.30.1680.10">
    <property type="entry name" value="ligand-binding face of the semaphorins, domain 2"/>
    <property type="match status" value="1"/>
</dbReference>
<dbReference type="Gene3D" id="2.20.100.10">
    <property type="entry name" value="Thrombospondin type-1 (TSP1) repeat"/>
    <property type="match status" value="6"/>
</dbReference>
<dbReference type="Gene3D" id="2.130.10.10">
    <property type="entry name" value="YVTN repeat-like/Quinoprotein amine dehydrogenase"/>
    <property type="match status" value="1"/>
</dbReference>
<dbReference type="InterPro" id="IPR002165">
    <property type="entry name" value="Plexin_repeat"/>
</dbReference>
<dbReference type="InterPro" id="IPR016201">
    <property type="entry name" value="PSI"/>
</dbReference>
<dbReference type="InterPro" id="IPR042821">
    <property type="entry name" value="Sema5A_sema"/>
</dbReference>
<dbReference type="InterPro" id="IPR001627">
    <property type="entry name" value="Semap_dom"/>
</dbReference>
<dbReference type="InterPro" id="IPR036352">
    <property type="entry name" value="Semap_dom_sf"/>
</dbReference>
<dbReference type="InterPro" id="IPR027231">
    <property type="entry name" value="Semaphorin"/>
</dbReference>
<dbReference type="InterPro" id="IPR000884">
    <property type="entry name" value="TSP1_rpt"/>
</dbReference>
<dbReference type="InterPro" id="IPR036383">
    <property type="entry name" value="TSP1_rpt_sf"/>
</dbReference>
<dbReference type="InterPro" id="IPR015943">
    <property type="entry name" value="WD40/YVTN_repeat-like_dom_sf"/>
</dbReference>
<dbReference type="PANTHER" id="PTHR11036">
    <property type="entry name" value="SEMAPHORIN"/>
    <property type="match status" value="1"/>
</dbReference>
<dbReference type="PANTHER" id="PTHR11036:SF78">
    <property type="entry name" value="SEMAPHORIN-5A"/>
    <property type="match status" value="1"/>
</dbReference>
<dbReference type="Pfam" id="PF01437">
    <property type="entry name" value="PSI"/>
    <property type="match status" value="1"/>
</dbReference>
<dbReference type="Pfam" id="PF01403">
    <property type="entry name" value="Sema"/>
    <property type="match status" value="1"/>
</dbReference>
<dbReference type="Pfam" id="PF23260">
    <property type="entry name" value="TSP1_2"/>
    <property type="match status" value="1"/>
</dbReference>
<dbReference type="Pfam" id="PF00090">
    <property type="entry name" value="TSP_1"/>
    <property type="match status" value="5"/>
</dbReference>
<dbReference type="PRINTS" id="PR01705">
    <property type="entry name" value="TSP1REPEAT"/>
</dbReference>
<dbReference type="SMART" id="SM00423">
    <property type="entry name" value="PSI"/>
    <property type="match status" value="1"/>
</dbReference>
<dbReference type="SMART" id="SM00630">
    <property type="entry name" value="Sema"/>
    <property type="match status" value="1"/>
</dbReference>
<dbReference type="SMART" id="SM00209">
    <property type="entry name" value="TSP1"/>
    <property type="match status" value="6"/>
</dbReference>
<dbReference type="SUPFAM" id="SSF103575">
    <property type="entry name" value="Plexin repeat"/>
    <property type="match status" value="1"/>
</dbReference>
<dbReference type="SUPFAM" id="SSF101912">
    <property type="entry name" value="Sema domain"/>
    <property type="match status" value="1"/>
</dbReference>
<dbReference type="SUPFAM" id="SSF82895">
    <property type="entry name" value="TSP-1 type 1 repeat"/>
    <property type="match status" value="6"/>
</dbReference>
<dbReference type="PROSITE" id="PS51004">
    <property type="entry name" value="SEMA"/>
    <property type="match status" value="1"/>
</dbReference>
<dbReference type="PROSITE" id="PS50092">
    <property type="entry name" value="TSP1"/>
    <property type="match status" value="6"/>
</dbReference>
<reference key="1">
    <citation type="journal article" date="1996" name="Mech. Dev.">
        <title>A novel class of murine semaphorins with homology to thrombospondin is differentially expressed during early embryogenesis.</title>
        <authorList>
            <person name="Adams R.H."/>
            <person name="Betz H."/>
            <person name="Pueschel A.W."/>
        </authorList>
    </citation>
    <scope>NUCLEOTIDE SEQUENCE [MRNA]</scope>
    <source>
        <strain>NMRI</strain>
    </source>
</reference>
<reference key="2">
    <citation type="journal article" date="2005" name="Mol. Cell. Biol.">
        <title>Inactivation of the Sema5a gene results in embryonic lethality and defective remodeling of the cranial vascular system.</title>
        <authorList>
            <person name="Fiore R."/>
            <person name="Rahim B."/>
            <person name="Christoffels V.M."/>
            <person name="Moorman A.F."/>
            <person name="Puschel A.W."/>
        </authorList>
    </citation>
    <scope>DEVELOPMENTAL STAGE</scope>
    <scope>DISRUPTION PHENOTYPE</scope>
</reference>
<reference key="3">
    <citation type="journal article" date="2010" name="Microvasc. Res.">
        <title>Semaphorin 5A promotes angiogenesis by increasing endothelial cell proliferation, migration, and decreasing apoptosis.</title>
        <authorList>
            <person name="Sadanandam A."/>
            <person name="Rosenbaugh E.G."/>
            <person name="Singh S."/>
            <person name="Varney M."/>
            <person name="Singh R.K."/>
        </authorList>
    </citation>
    <scope>FUNCTION</scope>
</reference>
<reference key="4">
    <citation type="journal article" date="2011" name="Neuron">
        <title>Class 5 transmembrane semaphorins control selective Mammalian retinal lamination and function.</title>
        <authorList>
            <person name="Matsuoka R.L."/>
            <person name="Chivatakarn O."/>
            <person name="Badea T.C."/>
            <person name="Samuels I.S."/>
            <person name="Cahill H."/>
            <person name="Katayama K."/>
            <person name="Kumar S.R."/>
            <person name="Suto F."/>
            <person name="Chedotal A."/>
            <person name="Peachey N.S."/>
            <person name="Nathans J."/>
            <person name="Yoshida Y."/>
            <person name="Giger R.J."/>
            <person name="Kolodkin A.L."/>
        </authorList>
    </citation>
    <scope>DEVELOPMENTAL STAGE</scope>
    <scope>DISRUPTION PHENOTYPE</scope>
</reference>
<protein>
    <recommendedName>
        <fullName>Semaphorin-5A</fullName>
    </recommendedName>
    <alternativeName>
        <fullName>Semaphorin-F</fullName>
        <shortName>Sema F</shortName>
    </alternativeName>
</protein>
<name>SEM5A_MOUSE</name>
<gene>
    <name type="primary">Sema5a</name>
    <name type="synonym">Semaf</name>
    <name type="synonym">SemF</name>
</gene>
<accession>Q62217</accession>
<organism>
    <name type="scientific">Mus musculus</name>
    <name type="common">Mouse</name>
    <dbReference type="NCBI Taxonomy" id="10090"/>
    <lineage>
        <taxon>Eukaryota</taxon>
        <taxon>Metazoa</taxon>
        <taxon>Chordata</taxon>
        <taxon>Craniata</taxon>
        <taxon>Vertebrata</taxon>
        <taxon>Euteleostomi</taxon>
        <taxon>Mammalia</taxon>
        <taxon>Eutheria</taxon>
        <taxon>Euarchontoglires</taxon>
        <taxon>Glires</taxon>
        <taxon>Rodentia</taxon>
        <taxon>Myomorpha</taxon>
        <taxon>Muroidea</taxon>
        <taxon>Muridae</taxon>
        <taxon>Murinae</taxon>
        <taxon>Mus</taxon>
        <taxon>Mus</taxon>
    </lineage>
</organism>
<sequence>MKGACILAWLFSSLGVWRLARPETQDPAKCQRAEHPVVSYKEIGPWLREFRAENAVDFSRLTFDPGQKELVVGARNYLFRLELEDLSLIQAVEWECDEATKKACYSKGKSKEECQNYIRVLLVGGDRLFTCGTNAFTPVCTIRSLSNLTEIHDQISGMARCPYSPQHNSTALLTASGELYAATAMDFPGRDPAIYRSLGTLPPLRTAQYNSKWLNEPNFVSSYDIGNFTYFFFRENAVEHDCGKTVFSRPARVCKNDIGGRFLLEDTWTTFMKARLNCSRPGEVPFYYNELQGTFFLPELDLIYGIFTTNVNSIASSAVCVFNLSAISQAFNGPFKYQENSRSAWLPYPNPNPNFQCGTMDQGLYVNLTERNLQDAQKFILMHEVVQPVTTVPSFMEDNSRFSHLAVDVVQGRETLVHIIYLGTDYGTIKKVRAPLSQSSGSCLLEEIELFPERRSEPIRSLQILHSQSVLFVGLQEHVAKIPLKRCHFHQTRSACIGAQDPYCGWDAVMKKCTSLEESLSMTQWDQSIPTCPTRNLTVDGSFGPWSPWTPCTHTDGTAVGSCLCRSRSCDRPAPQCGGWQCEGPRMEITNCSRNGGWTPWTSWSPCSTTCGIGFQVRQRSCSNPTPRHGGRVCVGQNREERYCNEHLLCPPHVFWTGWGPWERCTAQCGGGIQARRRTCENGPDCAGSNVEYHPCNTNACPELKKTTPWTPWTPVNISDNGGHYEQRFRYTCKARLPDPNLLEVGRQRIEMRYCSSDGTSGCSTDGLSGDFLRAGRYSAHTVNGAWSAWTSWSQCSRDCSRGIRNRKRVCNNPEPKFGGMPCLGPSLEFQECNILPCPVDGVWSCWSSWSKCSATCGGGHYMRTRSCSNPAPAYGGDICLGLHTEEALCNTQTCPESWSEWSDWSVCDASGTQVRARQCILLFPVGSQCSGNTTESRPCVFDSNFIPEVSVARSSSVEEKRCGEFNMFHMFHMMAVGLSSSILGCLLTLLVYTYCQRYQQQSHDATVIHPVSPAALNSSITNHINKLDKYDSVEAIKAFNKNNLILEERNKYFNPHLTGKTYSNAYFTDLNNYDEY</sequence>
<feature type="signal peptide" evidence="2">
    <location>
        <begin position="1"/>
        <end position="21"/>
    </location>
</feature>
<feature type="chain" id="PRO_0000032336" description="Semaphorin-5A">
    <location>
        <begin position="22"/>
        <end position="1077"/>
    </location>
</feature>
<feature type="topological domain" description="Extracellular" evidence="2">
    <location>
        <begin position="22"/>
        <end position="971"/>
    </location>
</feature>
<feature type="transmembrane region" description="Helical" evidence="2">
    <location>
        <begin position="972"/>
        <end position="992"/>
    </location>
</feature>
<feature type="topological domain" description="Cytoplasmic" evidence="2">
    <location>
        <begin position="993"/>
        <end position="1077"/>
    </location>
</feature>
<feature type="domain" description="Sema" evidence="4">
    <location>
        <begin position="35"/>
        <end position="484"/>
    </location>
</feature>
<feature type="domain" description="TSP type-1 1" evidence="3">
    <location>
        <begin position="540"/>
        <end position="593"/>
    </location>
</feature>
<feature type="domain" description="TSP type-1 2" evidence="3">
    <location>
        <begin position="595"/>
        <end position="651"/>
    </location>
</feature>
<feature type="domain" description="TSP type-1 3" evidence="3">
    <location>
        <begin position="653"/>
        <end position="702"/>
    </location>
</feature>
<feature type="domain" description="TSP type-1 4" evidence="3">
    <location>
        <begin position="707"/>
        <end position="765"/>
    </location>
</feature>
<feature type="domain" description="TSP type-1 5" evidence="3">
    <location>
        <begin position="784"/>
        <end position="839"/>
    </location>
</feature>
<feature type="domain" description="TSP type-1 6" evidence="3">
    <location>
        <begin position="841"/>
        <end position="896"/>
    </location>
</feature>
<feature type="domain" description="TSP type-1 7" evidence="3">
    <location>
        <begin position="897"/>
        <end position="944"/>
    </location>
</feature>
<feature type="glycosylation site" description="N-linked (GlcNAc...) asparagine" evidence="2">
    <location>
        <position position="147"/>
    </location>
</feature>
<feature type="glycosylation site" description="N-linked (GlcNAc...) asparagine" evidence="2">
    <location>
        <position position="168"/>
    </location>
</feature>
<feature type="glycosylation site" description="N-linked (GlcNAc...) asparagine" evidence="2">
    <location>
        <position position="227"/>
    </location>
</feature>
<feature type="glycosylation site" description="N-linked (GlcNAc...) asparagine" evidence="2">
    <location>
        <position position="277"/>
    </location>
</feature>
<feature type="glycosylation site" description="N-linked (GlcNAc...) asparagine" evidence="2">
    <location>
        <position position="323"/>
    </location>
</feature>
<feature type="glycosylation site" description="N-linked (GlcNAc...) asparagine" evidence="2">
    <location>
        <position position="367"/>
    </location>
</feature>
<feature type="glycosylation site" description="N-linked (GlcNAc...) asparagine" evidence="2">
    <location>
        <position position="536"/>
    </location>
</feature>
<feature type="glycosylation site" description="N-linked (GlcNAc...) asparagine" evidence="2">
    <location>
        <position position="591"/>
    </location>
</feature>
<feature type="glycosylation site" description="N-linked (GlcNAc...) asparagine" evidence="2">
    <location>
        <position position="717"/>
    </location>
</feature>
<feature type="glycosylation site" description="N-linked (GlcNAc...) asparagine" evidence="2">
    <location>
        <position position="933"/>
    </location>
</feature>
<feature type="disulfide bond" evidence="1">
    <location>
        <begin position="104"/>
        <end position="114"/>
    </location>
</feature>
<feature type="disulfide bond" evidence="1">
    <location>
        <begin position="131"/>
        <end position="140"/>
    </location>
</feature>
<feature type="disulfide bond" evidence="1">
    <location>
        <begin position="254"/>
        <end position="357"/>
    </location>
</feature>
<feature type="disulfide bond" evidence="1">
    <location>
        <begin position="278"/>
        <end position="320"/>
    </location>
</feature>
<feature type="disulfide bond" evidence="1">
    <location>
        <begin position="487"/>
        <end position="504"/>
    </location>
</feature>
<feature type="disulfide bond" evidence="1">
    <location>
        <begin position="496"/>
        <end position="513"/>
    </location>
</feature>
<feature type="disulfide bond" evidence="1">
    <location>
        <begin position="607"/>
        <end position="644"/>
    </location>
</feature>
<feature type="disulfide bond" evidence="1">
    <location>
        <begin position="611"/>
        <end position="650"/>
    </location>
</feature>
<feature type="disulfide bond" evidence="1">
    <location>
        <begin position="622"/>
        <end position="634"/>
    </location>
</feature>
<feature type="disulfide bond" evidence="1">
    <location>
        <begin position="665"/>
        <end position="696"/>
    </location>
</feature>
<feature type="disulfide bond" evidence="1">
    <location>
        <begin position="669"/>
        <end position="701"/>
    </location>
</feature>
<feature type="disulfide bond" evidence="1">
    <location>
        <begin position="680"/>
        <end position="686"/>
    </location>
</feature>
<feature type="disulfide bond" evidence="1">
    <location>
        <begin position="796"/>
        <end position="833"/>
    </location>
</feature>
<feature type="disulfide bond" evidence="1">
    <location>
        <begin position="800"/>
        <end position="838"/>
    </location>
</feature>
<feature type="disulfide bond" evidence="1">
    <location>
        <begin position="811"/>
        <end position="823"/>
    </location>
</feature>
<feature type="disulfide bond" evidence="1">
    <location>
        <begin position="853"/>
        <end position="890"/>
    </location>
</feature>
<feature type="disulfide bond" evidence="1">
    <location>
        <begin position="857"/>
        <end position="895"/>
    </location>
</feature>
<feature type="disulfide bond" evidence="1">
    <location>
        <begin position="868"/>
        <end position="880"/>
    </location>
</feature>
<evidence type="ECO:0000250" key="1"/>
<evidence type="ECO:0000255" key="2"/>
<evidence type="ECO:0000255" key="3">
    <source>
        <dbReference type="PROSITE-ProRule" id="PRU00210"/>
    </source>
</evidence>
<evidence type="ECO:0000255" key="4">
    <source>
        <dbReference type="PROSITE-ProRule" id="PRU00352"/>
    </source>
</evidence>
<evidence type="ECO:0000269" key="5">
    <source>
    </source>
</evidence>
<evidence type="ECO:0000269" key="6">
    <source>
    </source>
</evidence>
<evidence type="ECO:0000269" key="7">
    <source>
    </source>
</evidence>
<evidence type="ECO:0000305" key="8"/>